<proteinExistence type="inferred from homology"/>
<accession>P27019</accession>
<evidence type="ECO:0000305" key="1"/>
<sequence length="382" mass="43120">MAPTQSKVRIHNLAEAHEKTLRAFPIEVEQNPEGKKLLVKQIRIRTLGHADHSNDSICFLNTYGFIKEAVSQTEFMRAGQKSESKNTLTACMLPFGPGPNIGSPQKMLEYAEDIKIHVRKTAGCKEQIVFSLDRTPQVFRGFQFPRDRYACVPSDKYIKSPGKLVAGPNYCYIITFLSLTFCPSSQKFKVPRPVLNFRSTRMRGIHLEIIMKITCSENSPIRKTLITDDLENGPKASVWIHLCNLYKGRNPIKIYDEAYFAEKCKQMLLSVGISDLWGPTIAVHANGKIPKSASLYFNSRGWALHPIADASPTMAKQLWSIGCEIMEVNAILQGSDYSALVDHPDVIYRKIRIDPAKKQYAHSKWNPFKKAISMPNLTDDSI</sequence>
<organismHost>
    <name type="scientific">Homo sapiens</name>
    <name type="common">Human</name>
    <dbReference type="NCBI Taxonomy" id="9606"/>
</organismHost>
<feature type="chain" id="PRO_0000142767" description="Matrix protein">
    <location>
        <begin position="1"/>
        <end position="382"/>
    </location>
</feature>
<dbReference type="EMBL" id="D10241">
    <property type="protein sequence ID" value="BAA01086.1"/>
    <property type="molecule type" value="Genomic_RNA"/>
</dbReference>
<dbReference type="PIR" id="JQ1290">
    <property type="entry name" value="JQ1290"/>
</dbReference>
<dbReference type="RefSeq" id="YP_008378662.1">
    <property type="nucleotide sequence ID" value="NC_021928.1"/>
</dbReference>
<dbReference type="SMR" id="P27019"/>
<dbReference type="GeneID" id="16488736"/>
<dbReference type="KEGG" id="vg:16488736"/>
<dbReference type="GO" id="GO:0019031">
    <property type="term" value="C:viral envelope"/>
    <property type="evidence" value="ECO:0007669"/>
    <property type="project" value="UniProtKB-KW"/>
</dbReference>
<dbReference type="GO" id="GO:0039660">
    <property type="term" value="F:structural constituent of virion"/>
    <property type="evidence" value="ECO:0007669"/>
    <property type="project" value="UniProtKB-KW"/>
</dbReference>
<dbReference type="GO" id="GO:0019068">
    <property type="term" value="P:virion assembly"/>
    <property type="evidence" value="ECO:0007669"/>
    <property type="project" value="InterPro"/>
</dbReference>
<dbReference type="Gene3D" id="2.70.20.60">
    <property type="entry name" value="Viral matrix protein, C-terminal domain"/>
    <property type="match status" value="1"/>
</dbReference>
<dbReference type="Gene3D" id="2.70.20.50">
    <property type="entry name" value="Viral matrix protein, N-terminal domain"/>
    <property type="match status" value="1"/>
</dbReference>
<dbReference type="InterPro" id="IPR042539">
    <property type="entry name" value="Matrix_C"/>
</dbReference>
<dbReference type="InterPro" id="IPR042540">
    <property type="entry name" value="Matrix_N"/>
</dbReference>
<dbReference type="InterPro" id="IPR055413">
    <property type="entry name" value="Matrix_Paramyxo_C"/>
</dbReference>
<dbReference type="InterPro" id="IPR000982">
    <property type="entry name" value="Matrix_Paramyxo_N"/>
</dbReference>
<dbReference type="Pfam" id="PF23765">
    <property type="entry name" value="Matrix_Paramyxo_C"/>
    <property type="match status" value="1"/>
</dbReference>
<dbReference type="Pfam" id="PF00661">
    <property type="entry name" value="Matrix_Paramyxo_N"/>
    <property type="match status" value="1"/>
</dbReference>
<gene>
    <name type="primary">M</name>
</gene>
<name>MATRX_PI4HA</name>
<comment type="function">
    <text>The M protein has a crucial role in virus assembly and interacts with the RNP complex as well as with the viral membrane.</text>
</comment>
<comment type="subcellular location">
    <subcellularLocation>
        <location evidence="1">Virion</location>
    </subcellularLocation>
</comment>
<comment type="similarity">
    <text evidence="1">Belongs to the morbillivirus/respirovirus/rubulavirus M protein family.</text>
</comment>
<keyword id="KW-0261">Viral envelope protein</keyword>
<keyword id="KW-0468">Viral matrix protein</keyword>
<keyword id="KW-0946">Virion</keyword>
<protein>
    <recommendedName>
        <fullName>Matrix protein</fullName>
    </recommendedName>
</protein>
<organism>
    <name type="scientific">Human parainfluenza 4a virus (strain Toshiba)</name>
    <name type="common">HPIV-4a</name>
    <dbReference type="NCBI Taxonomy" id="11225"/>
    <lineage>
        <taxon>Viruses</taxon>
        <taxon>Riboviria</taxon>
        <taxon>Orthornavirae</taxon>
        <taxon>Negarnaviricota</taxon>
        <taxon>Haploviricotina</taxon>
        <taxon>Monjiviricetes</taxon>
        <taxon>Mononegavirales</taxon>
        <taxon>Paramyxoviridae</taxon>
        <taxon>Rubulavirinae</taxon>
        <taxon>Orthorubulavirus</taxon>
        <taxon>Orthorubulavirus hominis</taxon>
        <taxon>Human orthorubulavirus 4</taxon>
    </lineage>
</organism>
<reference key="1">
    <citation type="journal article" date="1991" name="J. Gen. Virol.">
        <title>Sequence characterization of the matrix protein genes of parainfluenza virus types 4A and 4B.</title>
        <authorList>
            <person name="Kondo K."/>
            <person name="Fujii M."/>
            <person name="Nakamura T."/>
            <person name="Bando H."/>
            <person name="Kawano M."/>
            <person name="Tsurudome M."/>
            <person name="Komada H."/>
            <person name="Kusakawa S."/>
            <person name="Nishio M."/>
            <person name="Ito Y."/>
        </authorList>
    </citation>
    <scope>NUCLEOTIDE SEQUENCE [GENOMIC RNA]</scope>
</reference>